<evidence type="ECO:0000255" key="1">
    <source>
        <dbReference type="HAMAP-Rule" id="MF_00332"/>
    </source>
</evidence>
<evidence type="ECO:0000256" key="2">
    <source>
        <dbReference type="SAM" id="MobiDB-lite"/>
    </source>
</evidence>
<reference key="1">
    <citation type="journal article" date="2007" name="PLoS ONE">
        <title>Genome sequencing shows that European isolates of Francisella tularensis subspecies tularensis are almost identical to US laboratory strain Schu S4.</title>
        <authorList>
            <person name="Chaudhuri R.R."/>
            <person name="Ren C.-P."/>
            <person name="Desmond L."/>
            <person name="Vincent G.A."/>
            <person name="Silman N.J."/>
            <person name="Brehm J.K."/>
            <person name="Elmore M.J."/>
            <person name="Hudson M.J."/>
            <person name="Forsman M."/>
            <person name="Isherwood K.E."/>
            <person name="Gurycova D."/>
            <person name="Minton N.P."/>
            <person name="Titball R.W."/>
            <person name="Pallen M.J."/>
            <person name="Vipond R."/>
        </authorList>
    </citation>
    <scope>NUCLEOTIDE SEQUENCE [LARGE SCALE GENOMIC DNA]</scope>
    <source>
        <strain>FSC 198</strain>
    </source>
</reference>
<accession>Q14GW9</accession>
<sequence length="642" mass="69254">MGKIIGIDLGTTNSCLAIMDGKTAKVIENAEGHRTTPSVVAYTDSGEILVGQAAKRQAVTNPDNTFFAIKRLIGRKYDDKAVQEDIKKKVPYAVIKADNGDAWVATKEGKKMAPPQVSAEVLRKMKKTAEDYLGEPVTEAVITVPAYFNDSQRQATKDAGKIAGLEVKRIINEPTAAALAYGVDSKKGEQTVAVYDLGGGTFDISIIEIADVDGDNQIEVLSTNGDTFLGGEDFDLALMNYLIDEFKKEQGIDLHNDKLALQRVREAAEKAKVELSSAQQTDVNLPYITADATGPKHLNIKVTRAKFESLVSDLVMRSLEPCKKALEDAGLSKSDITEVLLVGGQTRMPLVQEKVKEFFGKEPRKDVNPDEAVAVGAAIQGGVLAGDVKDILLLDVTPLSLGIETMGGVMTKLIERNTTIPTKKSQVFSTAEDNQPAVTIHVLQGEREMASANKSLGRFDLADIPPAPRGMPQIEVTFDIDANGILNVSAKDKATGKEQNIVIKSSSGLSEEDIEKMVQDAEANAEADKKFHDLVTARNTADNLIHSSRKAIQELGDKVTAAEKEKIEEACKELEAATKGDDKQAIESKTKALEEAFAPIAQKAYAEQAQAAVAQGGAKAEEPKKEEDVVDADFEDVEDDKK</sequence>
<name>DNAK_FRAT1</name>
<comment type="function">
    <text evidence="1">Acts as a chaperone.</text>
</comment>
<comment type="induction">
    <text evidence="1">By stress conditions e.g. heat shock.</text>
</comment>
<comment type="similarity">
    <text evidence="1">Belongs to the heat shock protein 70 family.</text>
</comment>
<organism>
    <name type="scientific">Francisella tularensis subsp. tularensis (strain FSC 198)</name>
    <dbReference type="NCBI Taxonomy" id="393115"/>
    <lineage>
        <taxon>Bacteria</taxon>
        <taxon>Pseudomonadati</taxon>
        <taxon>Pseudomonadota</taxon>
        <taxon>Gammaproteobacteria</taxon>
        <taxon>Thiotrichales</taxon>
        <taxon>Francisellaceae</taxon>
        <taxon>Francisella</taxon>
    </lineage>
</organism>
<keyword id="KW-0067">ATP-binding</keyword>
<keyword id="KW-0143">Chaperone</keyword>
<keyword id="KW-0547">Nucleotide-binding</keyword>
<keyword id="KW-0597">Phosphoprotein</keyword>
<keyword id="KW-0346">Stress response</keyword>
<feature type="chain" id="PRO_1000059561" description="Chaperone protein DnaK">
    <location>
        <begin position="1"/>
        <end position="642"/>
    </location>
</feature>
<feature type="region of interest" description="Disordered" evidence="2">
    <location>
        <begin position="615"/>
        <end position="642"/>
    </location>
</feature>
<feature type="compositionally biased region" description="Acidic residues" evidence="2">
    <location>
        <begin position="628"/>
        <end position="642"/>
    </location>
</feature>
<feature type="modified residue" description="Phosphothreonine; by autocatalysis" evidence="1">
    <location>
        <position position="201"/>
    </location>
</feature>
<protein>
    <recommendedName>
        <fullName evidence="1">Chaperone protein DnaK</fullName>
    </recommendedName>
    <alternativeName>
        <fullName evidence="1">HSP70</fullName>
    </alternativeName>
    <alternativeName>
        <fullName evidence="1">Heat shock 70 kDa protein</fullName>
    </alternativeName>
    <alternativeName>
        <fullName evidence="1">Heat shock protein 70</fullName>
    </alternativeName>
</protein>
<gene>
    <name evidence="1" type="primary">dnaK</name>
    <name type="ordered locus">FTF1269c</name>
</gene>
<dbReference type="EMBL" id="AM286280">
    <property type="protein sequence ID" value="CAL09285.1"/>
    <property type="molecule type" value="Genomic_DNA"/>
</dbReference>
<dbReference type="RefSeq" id="WP_003021930.1">
    <property type="nucleotide sequence ID" value="NC_008245.1"/>
</dbReference>
<dbReference type="SMR" id="Q14GW9"/>
<dbReference type="KEGG" id="ftf:FTF1269c"/>
<dbReference type="HOGENOM" id="CLU_005965_2_1_6"/>
<dbReference type="GO" id="GO:0005524">
    <property type="term" value="F:ATP binding"/>
    <property type="evidence" value="ECO:0007669"/>
    <property type="project" value="UniProtKB-UniRule"/>
</dbReference>
<dbReference type="GO" id="GO:0140662">
    <property type="term" value="F:ATP-dependent protein folding chaperone"/>
    <property type="evidence" value="ECO:0007669"/>
    <property type="project" value="InterPro"/>
</dbReference>
<dbReference type="GO" id="GO:0051082">
    <property type="term" value="F:unfolded protein binding"/>
    <property type="evidence" value="ECO:0007669"/>
    <property type="project" value="InterPro"/>
</dbReference>
<dbReference type="CDD" id="cd10234">
    <property type="entry name" value="ASKHA_NBD_HSP70_DnaK-like"/>
    <property type="match status" value="1"/>
</dbReference>
<dbReference type="FunFam" id="2.60.34.10:FF:000014">
    <property type="entry name" value="Chaperone protein DnaK HSP70"/>
    <property type="match status" value="1"/>
</dbReference>
<dbReference type="FunFam" id="1.20.1270.10:FF:000001">
    <property type="entry name" value="Molecular chaperone DnaK"/>
    <property type="match status" value="1"/>
</dbReference>
<dbReference type="FunFam" id="3.30.420.40:FF:000004">
    <property type="entry name" value="Molecular chaperone DnaK"/>
    <property type="match status" value="1"/>
</dbReference>
<dbReference type="FunFam" id="3.90.640.10:FF:000003">
    <property type="entry name" value="Molecular chaperone DnaK"/>
    <property type="match status" value="1"/>
</dbReference>
<dbReference type="Gene3D" id="1.20.1270.10">
    <property type="match status" value="1"/>
</dbReference>
<dbReference type="Gene3D" id="3.30.420.40">
    <property type="match status" value="2"/>
</dbReference>
<dbReference type="Gene3D" id="3.90.640.10">
    <property type="entry name" value="Actin, Chain A, domain 4"/>
    <property type="match status" value="1"/>
</dbReference>
<dbReference type="Gene3D" id="2.60.34.10">
    <property type="entry name" value="Substrate Binding Domain Of DNAk, Chain A, domain 1"/>
    <property type="match status" value="1"/>
</dbReference>
<dbReference type="HAMAP" id="MF_00332">
    <property type="entry name" value="DnaK"/>
    <property type="match status" value="1"/>
</dbReference>
<dbReference type="InterPro" id="IPR043129">
    <property type="entry name" value="ATPase_NBD"/>
</dbReference>
<dbReference type="InterPro" id="IPR012725">
    <property type="entry name" value="Chaperone_DnaK"/>
</dbReference>
<dbReference type="InterPro" id="IPR018181">
    <property type="entry name" value="Heat_shock_70_CS"/>
</dbReference>
<dbReference type="InterPro" id="IPR029048">
    <property type="entry name" value="HSP70_C_sf"/>
</dbReference>
<dbReference type="InterPro" id="IPR029047">
    <property type="entry name" value="HSP70_peptide-bd_sf"/>
</dbReference>
<dbReference type="InterPro" id="IPR013126">
    <property type="entry name" value="Hsp_70_fam"/>
</dbReference>
<dbReference type="NCBIfam" id="NF001413">
    <property type="entry name" value="PRK00290.1"/>
    <property type="match status" value="1"/>
</dbReference>
<dbReference type="NCBIfam" id="NF003520">
    <property type="entry name" value="PRK05183.1"/>
    <property type="match status" value="1"/>
</dbReference>
<dbReference type="NCBIfam" id="TIGR02350">
    <property type="entry name" value="prok_dnaK"/>
    <property type="match status" value="1"/>
</dbReference>
<dbReference type="PANTHER" id="PTHR19375">
    <property type="entry name" value="HEAT SHOCK PROTEIN 70KDA"/>
    <property type="match status" value="1"/>
</dbReference>
<dbReference type="Pfam" id="PF00012">
    <property type="entry name" value="HSP70"/>
    <property type="match status" value="1"/>
</dbReference>
<dbReference type="PRINTS" id="PR00301">
    <property type="entry name" value="HEATSHOCK70"/>
</dbReference>
<dbReference type="SUPFAM" id="SSF53067">
    <property type="entry name" value="Actin-like ATPase domain"/>
    <property type="match status" value="2"/>
</dbReference>
<dbReference type="SUPFAM" id="SSF100934">
    <property type="entry name" value="Heat shock protein 70kD (HSP70), C-terminal subdomain"/>
    <property type="match status" value="1"/>
</dbReference>
<dbReference type="SUPFAM" id="SSF100920">
    <property type="entry name" value="Heat shock protein 70kD (HSP70), peptide-binding domain"/>
    <property type="match status" value="1"/>
</dbReference>
<dbReference type="PROSITE" id="PS00297">
    <property type="entry name" value="HSP70_1"/>
    <property type="match status" value="1"/>
</dbReference>
<dbReference type="PROSITE" id="PS00329">
    <property type="entry name" value="HSP70_2"/>
    <property type="match status" value="1"/>
</dbReference>
<dbReference type="PROSITE" id="PS01036">
    <property type="entry name" value="HSP70_3"/>
    <property type="match status" value="1"/>
</dbReference>
<proteinExistence type="inferred from homology"/>